<name>IQD8_ARATH</name>
<gene>
    <name evidence="6" type="primary">IQD8</name>
    <name evidence="8" type="ordered locus">At1g72670</name>
    <name evidence="9" type="ORF">F28P22.14</name>
</gene>
<organism>
    <name type="scientific">Arabidopsis thaliana</name>
    <name type="common">Mouse-ear cress</name>
    <dbReference type="NCBI Taxonomy" id="3702"/>
    <lineage>
        <taxon>Eukaryota</taxon>
        <taxon>Viridiplantae</taxon>
        <taxon>Streptophyta</taxon>
        <taxon>Embryophyta</taxon>
        <taxon>Tracheophyta</taxon>
        <taxon>Spermatophyta</taxon>
        <taxon>Magnoliopsida</taxon>
        <taxon>eudicotyledons</taxon>
        <taxon>Gunneridae</taxon>
        <taxon>Pentapetalae</taxon>
        <taxon>rosids</taxon>
        <taxon>malvids</taxon>
        <taxon>Brassicales</taxon>
        <taxon>Brassicaceae</taxon>
        <taxon>Camelineae</taxon>
        <taxon>Arabidopsis</taxon>
    </lineage>
</organism>
<feature type="chain" id="PRO_0000453115" description="Protein IQ-DOMAIN 8">
    <location>
        <begin position="1"/>
        <end position="414"/>
    </location>
</feature>
<feature type="domain" description="IQ 1" evidence="2">
    <location>
        <begin position="92"/>
        <end position="120"/>
    </location>
</feature>
<feature type="domain" description="IQ 2" evidence="2">
    <location>
        <begin position="121"/>
        <end position="143"/>
    </location>
</feature>
<feature type="domain" description="IQ 3" evidence="2">
    <location>
        <begin position="144"/>
        <end position="169"/>
    </location>
</feature>
<feature type="region of interest" description="Disordered" evidence="4">
    <location>
        <begin position="40"/>
        <end position="61"/>
    </location>
</feature>
<feature type="region of interest" description="Calmodulin-binding" evidence="6">
    <location>
        <begin position="119"/>
        <end position="132"/>
    </location>
</feature>
<feature type="region of interest" description="Disordered" evidence="4">
    <location>
        <begin position="156"/>
        <end position="190"/>
    </location>
</feature>
<feature type="region of interest" description="Disordered" evidence="4">
    <location>
        <begin position="218"/>
        <end position="244"/>
    </location>
</feature>
<feature type="region of interest" description="Disordered" evidence="4">
    <location>
        <begin position="262"/>
        <end position="329"/>
    </location>
</feature>
<feature type="region of interest" description="Disordered" evidence="4">
    <location>
        <begin position="347"/>
        <end position="398"/>
    </location>
</feature>
<feature type="short sequence motif" description="Nuclear localization signal 1" evidence="3">
    <location>
        <begin position="14"/>
        <end position="21"/>
    </location>
</feature>
<feature type="short sequence motif" description="Nuclear localization signal 2" evidence="3">
    <location>
        <begin position="336"/>
        <end position="343"/>
    </location>
</feature>
<feature type="compositionally biased region" description="Basic and acidic residues" evidence="4">
    <location>
        <begin position="164"/>
        <end position="184"/>
    </location>
</feature>
<feature type="compositionally biased region" description="Polar residues" evidence="4">
    <location>
        <begin position="231"/>
        <end position="244"/>
    </location>
</feature>
<feature type="compositionally biased region" description="Basic and acidic residues" evidence="4">
    <location>
        <begin position="274"/>
        <end position="289"/>
    </location>
</feature>
<feature type="compositionally biased region" description="Low complexity" evidence="4">
    <location>
        <begin position="307"/>
        <end position="328"/>
    </location>
</feature>
<protein>
    <recommendedName>
        <fullName evidence="6">Protein IQ-DOMAIN 8</fullName>
        <shortName evidence="6">AtIQD8</shortName>
    </recommendedName>
</protein>
<evidence type="ECO:0000250" key="1">
    <source>
        <dbReference type="UniProtKB" id="Q9SF32"/>
    </source>
</evidence>
<evidence type="ECO:0000255" key="2">
    <source>
        <dbReference type="PROSITE-ProRule" id="PRU00116"/>
    </source>
</evidence>
<evidence type="ECO:0000255" key="3">
    <source>
        <dbReference type="PROSITE-ProRule" id="PRU00768"/>
    </source>
</evidence>
<evidence type="ECO:0000256" key="4">
    <source>
        <dbReference type="SAM" id="MobiDB-lite"/>
    </source>
</evidence>
<evidence type="ECO:0000269" key="5">
    <source>
    </source>
</evidence>
<evidence type="ECO:0000303" key="6">
    <source>
    </source>
</evidence>
<evidence type="ECO:0000305" key="7"/>
<evidence type="ECO:0000312" key="8">
    <source>
        <dbReference type="Araport" id="AT1G72670"/>
    </source>
</evidence>
<evidence type="ECO:0000312" key="9">
    <source>
        <dbReference type="EMBL" id="AAG51853.1"/>
    </source>
</evidence>
<proteinExistence type="evidence at protein level"/>
<accession>Q9CAI2</accession>
<dbReference type="EMBL" id="AC010926">
    <property type="protein sequence ID" value="AAG51853.1"/>
    <property type="molecule type" value="Genomic_DNA"/>
</dbReference>
<dbReference type="EMBL" id="CP002684">
    <property type="protein sequence ID" value="AEE35359.1"/>
    <property type="molecule type" value="Genomic_DNA"/>
</dbReference>
<dbReference type="EMBL" id="BT010652">
    <property type="protein sequence ID" value="AAR07516.1"/>
    <property type="molecule type" value="mRNA"/>
</dbReference>
<dbReference type="EMBL" id="AK175909">
    <property type="protein sequence ID" value="BAD43672.1"/>
    <property type="molecule type" value="mRNA"/>
</dbReference>
<dbReference type="PIR" id="D96751">
    <property type="entry name" value="D96751"/>
</dbReference>
<dbReference type="RefSeq" id="NP_177411.1">
    <property type="nucleotide sequence ID" value="NM_105926.5"/>
</dbReference>
<dbReference type="SMR" id="Q9CAI2"/>
<dbReference type="FunCoup" id="Q9CAI2">
    <property type="interactions" value="97"/>
</dbReference>
<dbReference type="IntAct" id="Q9CAI2">
    <property type="interactions" value="1"/>
</dbReference>
<dbReference type="STRING" id="3702.Q9CAI2"/>
<dbReference type="GlyGen" id="Q9CAI2">
    <property type="glycosylation" value="1 site"/>
</dbReference>
<dbReference type="iPTMnet" id="Q9CAI2"/>
<dbReference type="PaxDb" id="3702-AT1G72670.1"/>
<dbReference type="ProteomicsDB" id="175098"/>
<dbReference type="EnsemblPlants" id="AT1G72670.1">
    <property type="protein sequence ID" value="AT1G72670.1"/>
    <property type="gene ID" value="AT1G72670"/>
</dbReference>
<dbReference type="GeneID" id="843599"/>
<dbReference type="Gramene" id="AT1G72670.1">
    <property type="protein sequence ID" value="AT1G72670.1"/>
    <property type="gene ID" value="AT1G72670"/>
</dbReference>
<dbReference type="KEGG" id="ath:AT1G72670"/>
<dbReference type="Araport" id="AT1G72670"/>
<dbReference type="TAIR" id="AT1G72670">
    <property type="gene designation" value="IQD8"/>
</dbReference>
<dbReference type="eggNOG" id="ENOG502SIC6">
    <property type="taxonomic scope" value="Eukaryota"/>
</dbReference>
<dbReference type="HOGENOM" id="CLU_037259_0_1_1"/>
<dbReference type="InParanoid" id="Q9CAI2"/>
<dbReference type="OMA" id="SHSMQRN"/>
<dbReference type="PhylomeDB" id="Q9CAI2"/>
<dbReference type="PRO" id="PR:Q9CAI2"/>
<dbReference type="Proteomes" id="UP000006548">
    <property type="component" value="Chromosome 1"/>
</dbReference>
<dbReference type="ExpressionAtlas" id="Q9CAI2">
    <property type="expression patterns" value="baseline and differential"/>
</dbReference>
<dbReference type="GO" id="GO:0005635">
    <property type="term" value="C:nuclear envelope"/>
    <property type="evidence" value="ECO:0007669"/>
    <property type="project" value="UniProtKB-SubCell"/>
</dbReference>
<dbReference type="GO" id="GO:0009524">
    <property type="term" value="C:phragmoplast"/>
    <property type="evidence" value="ECO:0000314"/>
    <property type="project" value="TAIR"/>
</dbReference>
<dbReference type="GO" id="GO:0009574">
    <property type="term" value="C:preprophase band"/>
    <property type="evidence" value="ECO:0000314"/>
    <property type="project" value="TAIR"/>
</dbReference>
<dbReference type="GO" id="GO:0005516">
    <property type="term" value="F:calmodulin binding"/>
    <property type="evidence" value="ECO:0007669"/>
    <property type="project" value="UniProtKB-KW"/>
</dbReference>
<dbReference type="GO" id="GO:2000073">
    <property type="term" value="P:regulation of cytokinesis, site selection"/>
    <property type="evidence" value="ECO:0000314"/>
    <property type="project" value="TAIR"/>
</dbReference>
<dbReference type="CDD" id="cd23767">
    <property type="entry name" value="IQCD"/>
    <property type="match status" value="1"/>
</dbReference>
<dbReference type="Gene3D" id="1.20.5.190">
    <property type="match status" value="1"/>
</dbReference>
<dbReference type="InterPro" id="IPR000048">
    <property type="entry name" value="IQ_motif_EF-hand-BS"/>
</dbReference>
<dbReference type="PANTHER" id="PTHR32295">
    <property type="entry name" value="IQ-DOMAIN 5-RELATED"/>
    <property type="match status" value="1"/>
</dbReference>
<dbReference type="PANTHER" id="PTHR32295:SF126">
    <property type="entry name" value="PROTEIN IQ-DOMAIN 8"/>
    <property type="match status" value="1"/>
</dbReference>
<dbReference type="Pfam" id="PF00612">
    <property type="entry name" value="IQ"/>
    <property type="match status" value="2"/>
</dbReference>
<dbReference type="SMART" id="SM00015">
    <property type="entry name" value="IQ"/>
    <property type="match status" value="2"/>
</dbReference>
<dbReference type="PROSITE" id="PS50096">
    <property type="entry name" value="IQ"/>
    <property type="match status" value="2"/>
</dbReference>
<comment type="function">
    <text evidence="1">May be involved in cooperative interactions with calmodulins or calmodulin-like proteins (By similarity). Recruits calmodulin proteins to microtubules, thus being a potential scaffold in cellular signaling and trafficking (By similarity). May associate with nucleic acids and regulate gene expression at the transcriptional or post-transcriptional level (By similarity).</text>
</comment>
<comment type="subunit">
    <text evidence="1">Binds to multiple calmodulin (CaM) in the presence of Ca(2+) and CaM-like proteins.</text>
</comment>
<comment type="interaction">
    <interactant intactId="EBI-25517196">
        <id>Q9CAI2</id>
    </interactant>
    <interactant intactId="EBI-25506855">
        <id>O23160</id>
        <label>MYB73</label>
    </interactant>
    <organismsDiffer>false</organismsDiffer>
    <experiments>3</experiments>
</comment>
<comment type="subcellular location">
    <subcellularLocation>
        <location evidence="3">Nucleus</location>
    </subcellularLocation>
    <subcellularLocation>
        <location evidence="5">Cytoplasm</location>
        <location evidence="5">Cytoskeleton</location>
    </subcellularLocation>
    <subcellularLocation>
        <location evidence="5">Nucleus envelope</location>
    </subcellularLocation>
    <text evidence="5">Recruits calmodulin (CaM2) to microtubules.</text>
</comment>
<comment type="similarity">
    <text evidence="7">Belongs to the IQD family.</text>
</comment>
<keyword id="KW-0112">Calmodulin-binding</keyword>
<keyword id="KW-0963">Cytoplasm</keyword>
<keyword id="KW-0206">Cytoskeleton</keyword>
<keyword id="KW-0539">Nucleus</keyword>
<keyword id="KW-1185">Reference proteome</keyword>
<keyword id="KW-0677">Repeat</keyword>
<reference key="1">
    <citation type="journal article" date="2000" name="Nature">
        <title>Sequence and analysis of chromosome 1 of the plant Arabidopsis thaliana.</title>
        <authorList>
            <person name="Theologis A."/>
            <person name="Ecker J.R."/>
            <person name="Palm C.J."/>
            <person name="Federspiel N.A."/>
            <person name="Kaul S."/>
            <person name="White O."/>
            <person name="Alonso J."/>
            <person name="Altafi H."/>
            <person name="Araujo R."/>
            <person name="Bowman C.L."/>
            <person name="Brooks S.Y."/>
            <person name="Buehler E."/>
            <person name="Chan A."/>
            <person name="Chao Q."/>
            <person name="Chen H."/>
            <person name="Cheuk R.F."/>
            <person name="Chin C.W."/>
            <person name="Chung M.K."/>
            <person name="Conn L."/>
            <person name="Conway A.B."/>
            <person name="Conway A.R."/>
            <person name="Creasy T.H."/>
            <person name="Dewar K."/>
            <person name="Dunn P."/>
            <person name="Etgu P."/>
            <person name="Feldblyum T.V."/>
            <person name="Feng J.-D."/>
            <person name="Fong B."/>
            <person name="Fujii C.Y."/>
            <person name="Gill J.E."/>
            <person name="Goldsmith A.D."/>
            <person name="Haas B."/>
            <person name="Hansen N.F."/>
            <person name="Hughes B."/>
            <person name="Huizar L."/>
            <person name="Hunter J.L."/>
            <person name="Jenkins J."/>
            <person name="Johnson-Hopson C."/>
            <person name="Khan S."/>
            <person name="Khaykin E."/>
            <person name="Kim C.J."/>
            <person name="Koo H.L."/>
            <person name="Kremenetskaia I."/>
            <person name="Kurtz D.B."/>
            <person name="Kwan A."/>
            <person name="Lam B."/>
            <person name="Langin-Hooper S."/>
            <person name="Lee A."/>
            <person name="Lee J.M."/>
            <person name="Lenz C.A."/>
            <person name="Li J.H."/>
            <person name="Li Y.-P."/>
            <person name="Lin X."/>
            <person name="Liu S.X."/>
            <person name="Liu Z.A."/>
            <person name="Luros J.S."/>
            <person name="Maiti R."/>
            <person name="Marziali A."/>
            <person name="Militscher J."/>
            <person name="Miranda M."/>
            <person name="Nguyen M."/>
            <person name="Nierman W.C."/>
            <person name="Osborne B.I."/>
            <person name="Pai G."/>
            <person name="Peterson J."/>
            <person name="Pham P.K."/>
            <person name="Rizzo M."/>
            <person name="Rooney T."/>
            <person name="Rowley D."/>
            <person name="Sakano H."/>
            <person name="Salzberg S.L."/>
            <person name="Schwartz J.R."/>
            <person name="Shinn P."/>
            <person name="Southwick A.M."/>
            <person name="Sun H."/>
            <person name="Tallon L.J."/>
            <person name="Tambunga G."/>
            <person name="Toriumi M.J."/>
            <person name="Town C.D."/>
            <person name="Utterback T."/>
            <person name="Van Aken S."/>
            <person name="Vaysberg M."/>
            <person name="Vysotskaia V.S."/>
            <person name="Walker M."/>
            <person name="Wu D."/>
            <person name="Yu G."/>
            <person name="Fraser C.M."/>
            <person name="Venter J.C."/>
            <person name="Davis R.W."/>
        </authorList>
    </citation>
    <scope>NUCLEOTIDE SEQUENCE [LARGE SCALE GENOMIC DNA]</scope>
    <source>
        <strain>cv. Columbia</strain>
    </source>
</reference>
<reference key="2">
    <citation type="journal article" date="2017" name="Plant J.">
        <title>Araport11: a complete reannotation of the Arabidopsis thaliana reference genome.</title>
        <authorList>
            <person name="Cheng C.Y."/>
            <person name="Krishnakumar V."/>
            <person name="Chan A.P."/>
            <person name="Thibaud-Nissen F."/>
            <person name="Schobel S."/>
            <person name="Town C.D."/>
        </authorList>
    </citation>
    <scope>GENOME REANNOTATION</scope>
    <source>
        <strain>cv. Columbia</strain>
    </source>
</reference>
<reference key="3">
    <citation type="submission" date="2003-10" db="EMBL/GenBank/DDBJ databases">
        <title>Arabidopsis ORF clones.</title>
        <authorList>
            <person name="Shinn P."/>
            <person name="Chen H."/>
            <person name="Cheuk R.F."/>
            <person name="Kim C.J."/>
            <person name="Carninci P."/>
            <person name="Hayashizaki Y."/>
            <person name="Ishida J."/>
            <person name="Kamiya A."/>
            <person name="Kawai J."/>
            <person name="Narusaka M."/>
            <person name="Sakurai T."/>
            <person name="Satou M."/>
            <person name="Seki M."/>
            <person name="Shinozaki K."/>
            <person name="Ecker J.R."/>
        </authorList>
    </citation>
    <scope>NUCLEOTIDE SEQUENCE [LARGE SCALE MRNA]</scope>
    <source>
        <strain>cv. Columbia</strain>
    </source>
</reference>
<reference key="4">
    <citation type="submission" date="2004-09" db="EMBL/GenBank/DDBJ databases">
        <title>Large-scale analysis of RIKEN Arabidopsis full-length (RAFL) cDNAs.</title>
        <authorList>
            <person name="Totoki Y."/>
            <person name="Seki M."/>
            <person name="Ishida J."/>
            <person name="Nakajima M."/>
            <person name="Enju A."/>
            <person name="Kamiya A."/>
            <person name="Narusaka M."/>
            <person name="Shin-i T."/>
            <person name="Nakagawa M."/>
            <person name="Sakamoto N."/>
            <person name="Oishi K."/>
            <person name="Kohara Y."/>
            <person name="Kobayashi M."/>
            <person name="Toyoda A."/>
            <person name="Sakaki Y."/>
            <person name="Sakurai T."/>
            <person name="Iida K."/>
            <person name="Akiyama K."/>
            <person name="Satou M."/>
            <person name="Toyoda T."/>
            <person name="Konagaya A."/>
            <person name="Carninci P."/>
            <person name="Kawai J."/>
            <person name="Hayashizaki Y."/>
            <person name="Shinozaki K."/>
        </authorList>
    </citation>
    <scope>NUCLEOTIDE SEQUENCE [LARGE SCALE MRNA]</scope>
    <source>
        <strain>cv. Columbia</strain>
    </source>
</reference>
<reference key="5">
    <citation type="journal article" date="2005" name="BMC Evol. Biol.">
        <title>Genome-wide comparative analysis of the IQD gene families in Arabidopsis thaliana and Oryza sativa.</title>
        <authorList>
            <person name="Abel S."/>
            <person name="Savchenko T."/>
            <person name="Levy M."/>
        </authorList>
    </citation>
    <scope>INTERACTION WITH CALMODULIN</scope>
    <scope>GENE FAMILY</scope>
    <scope>NOMENCLATURE</scope>
    <source>
        <strain>cv. Columbia</strain>
    </source>
</reference>
<reference key="6">
    <citation type="journal article" date="2017" name="Plant Physiol.">
        <title>The IQD family of calmodulin-binding proteins links calcium signaling to microtubules, membrane subdomains, and the nucleus.</title>
        <authorList>
            <person name="Buerstenbinder K."/>
            <person name="Moeller B."/>
            <person name="Ploetner R."/>
            <person name="Stamm G."/>
            <person name="Hause G."/>
            <person name="Mitra D."/>
            <person name="Abel S."/>
        </authorList>
    </citation>
    <scope>SUBCELLULAR LOCATION</scope>
    <scope>INTERACTION WITH CALMODULIN</scope>
    <source>
        <strain>cv. Columbia</strain>
    </source>
</reference>
<reference key="7">
    <citation type="journal article" date="2017" name="Plant Signal. Behav.">
        <title>Functions of IQD proteins as hubs in cellular calcium and auxin signaling: A toolbox for shape formation and tissue-specification in plants?</title>
        <authorList>
            <person name="Buerstenbinder K."/>
            <person name="Mitra D."/>
            <person name="Quegwer J."/>
        </authorList>
    </citation>
    <scope>REVIEW</scope>
</reference>
<sequence length="414" mass="45894">MGGSGNWIKSLITNKKNITDDQEKNIKKKWKLWRTSSEGLISSSKGFKSRGGSYGTPSLGSDPPSFSADDSFTAAVAAVIRAPPKDFFLVKREWAATRIQAAFRAFLARQALRALKAVVRIQAIFRGRQVRKQADVTLRCMQALVRVQARVRAHCNRGPSDGQELEKPSDQQKDDPAKQAEKGWCDSPGSINEVRTKLQMRQEGAIKRERAMVYALTHQPRTCPSPAKASKQGSVKKNNGSCKSSPGWNWLDRWVADRPWEGRLMEGPTNSSENARKSESSVSEHDTVQVRKNNLTTRVLARPPPMSSSATSSESSSTSQSPVPFSGSFLEEGGYYRKPSYMSLTQSIKAKQRRSGSSSSCSKTPFEKKQSMSYNGDVNVRRSAGSDPLNNQWTDLYPPAQVTGRHMWAKSQRG</sequence>